<organism>
    <name type="scientific">Pyrococcus furiosus (strain ATCC 43587 / DSM 3638 / JCM 8422 / Vc1)</name>
    <dbReference type="NCBI Taxonomy" id="186497"/>
    <lineage>
        <taxon>Archaea</taxon>
        <taxon>Methanobacteriati</taxon>
        <taxon>Methanobacteriota</taxon>
        <taxon>Thermococci</taxon>
        <taxon>Thermococcales</taxon>
        <taxon>Thermococcaceae</taxon>
        <taxon>Pyrococcus</taxon>
    </lineage>
</organism>
<name>RRP42_PYRFU</name>
<dbReference type="EMBL" id="AE009950">
    <property type="protein sequence ID" value="AAL81691.1"/>
    <property type="molecule type" value="Genomic_DNA"/>
</dbReference>
<dbReference type="RefSeq" id="WP_011012713.1">
    <property type="nucleotide sequence ID" value="NC_003413.1"/>
</dbReference>
<dbReference type="SMR" id="Q8U0M0"/>
<dbReference type="STRING" id="186497.PF1567"/>
<dbReference type="PaxDb" id="186497-PF1567"/>
<dbReference type="GeneID" id="1469443"/>
<dbReference type="KEGG" id="pfu:PF1567"/>
<dbReference type="PATRIC" id="fig|186497.12.peg.1633"/>
<dbReference type="eggNOG" id="arCOG01574">
    <property type="taxonomic scope" value="Archaea"/>
</dbReference>
<dbReference type="HOGENOM" id="CLU_038194_0_0_2"/>
<dbReference type="OrthoDB" id="30932at2157"/>
<dbReference type="PhylomeDB" id="Q8U0M0"/>
<dbReference type="Proteomes" id="UP000001013">
    <property type="component" value="Chromosome"/>
</dbReference>
<dbReference type="GO" id="GO:0000177">
    <property type="term" value="C:cytoplasmic exosome (RNase complex)"/>
    <property type="evidence" value="ECO:0007669"/>
    <property type="project" value="TreeGrafter"/>
</dbReference>
<dbReference type="GO" id="GO:0035925">
    <property type="term" value="F:mRNA 3'-UTR AU-rich region binding"/>
    <property type="evidence" value="ECO:0007669"/>
    <property type="project" value="TreeGrafter"/>
</dbReference>
<dbReference type="GO" id="GO:0016075">
    <property type="term" value="P:rRNA catabolic process"/>
    <property type="evidence" value="ECO:0007669"/>
    <property type="project" value="TreeGrafter"/>
</dbReference>
<dbReference type="CDD" id="cd11365">
    <property type="entry name" value="RNase_PH_archRRP42"/>
    <property type="match status" value="1"/>
</dbReference>
<dbReference type="FunFam" id="3.30.230.70:FF:000017">
    <property type="entry name" value="Exosome complex component Rrp42"/>
    <property type="match status" value="1"/>
</dbReference>
<dbReference type="Gene3D" id="3.30.230.70">
    <property type="entry name" value="GHMP Kinase, N-terminal domain"/>
    <property type="match status" value="1"/>
</dbReference>
<dbReference type="HAMAP" id="MF_00622">
    <property type="entry name" value="Exosome_Rrp42"/>
    <property type="match status" value="1"/>
</dbReference>
<dbReference type="InterPro" id="IPR001247">
    <property type="entry name" value="ExoRNase_PH_dom1"/>
</dbReference>
<dbReference type="InterPro" id="IPR015847">
    <property type="entry name" value="ExoRNase_PH_dom2"/>
</dbReference>
<dbReference type="InterPro" id="IPR036345">
    <property type="entry name" value="ExoRNase_PH_dom2_sf"/>
</dbReference>
<dbReference type="InterPro" id="IPR050590">
    <property type="entry name" value="Exosome_comp_Rrp42_subfam"/>
</dbReference>
<dbReference type="InterPro" id="IPR027408">
    <property type="entry name" value="PNPase/RNase_PH_dom_sf"/>
</dbReference>
<dbReference type="InterPro" id="IPR020568">
    <property type="entry name" value="Ribosomal_Su5_D2-typ_SF"/>
</dbReference>
<dbReference type="InterPro" id="IPR020869">
    <property type="entry name" value="Rrp42_archaea"/>
</dbReference>
<dbReference type="NCBIfam" id="NF003282">
    <property type="entry name" value="PRK04282.1-1"/>
    <property type="match status" value="1"/>
</dbReference>
<dbReference type="PANTHER" id="PTHR11097:SF8">
    <property type="entry name" value="EXOSOME COMPLEX COMPONENT RRP42"/>
    <property type="match status" value="1"/>
</dbReference>
<dbReference type="PANTHER" id="PTHR11097">
    <property type="entry name" value="EXOSOME COMPLEX EXONUCLEASE RIBOSOMAL RNA PROCESSING PROTEIN"/>
    <property type="match status" value="1"/>
</dbReference>
<dbReference type="Pfam" id="PF01138">
    <property type="entry name" value="RNase_PH"/>
    <property type="match status" value="1"/>
</dbReference>
<dbReference type="Pfam" id="PF03725">
    <property type="entry name" value="RNase_PH_C"/>
    <property type="match status" value="1"/>
</dbReference>
<dbReference type="SUPFAM" id="SSF55666">
    <property type="entry name" value="Ribonuclease PH domain 2-like"/>
    <property type="match status" value="1"/>
</dbReference>
<dbReference type="SUPFAM" id="SSF54211">
    <property type="entry name" value="Ribosomal protein S5 domain 2-like"/>
    <property type="match status" value="1"/>
</dbReference>
<protein>
    <recommendedName>
        <fullName evidence="1">Exosome complex component Rrp42</fullName>
    </recommendedName>
</protein>
<accession>Q8U0M0</accession>
<feature type="chain" id="PRO_0000140003" description="Exosome complex component Rrp42">
    <location>
        <begin position="1"/>
        <end position="277"/>
    </location>
</feature>
<sequence length="277" mass="30497">MSNDEIVAGIMRDYILNLLKEKKRIDDRGFEDYRPIEVEVGVIEKAEGSALVKLGNTQVLVGIKATLGEPFPDTPNMGVMTTNVELVPLASPTFEPGPPDERAIELARVIDRGIRESRALNLEKMVIAPGKIVRVVFIDVHVLDHDGNLMDAIGIGAIAALLNARVPKVLYNEETGEVEILEEKEPLPVEKIPISVTFAKIGNYLVVDPTLEEEQIMDGRLTITTDETGHISAVQKSEGGAFKLEEVMYAVETAFKKAEEIRKIILNALEKANNSEE</sequence>
<proteinExistence type="inferred from homology"/>
<gene>
    <name evidence="1" type="primary">rrp42</name>
    <name type="ordered locus">PF1567</name>
</gene>
<keyword id="KW-0963">Cytoplasm</keyword>
<keyword id="KW-0271">Exosome</keyword>
<keyword id="KW-1185">Reference proteome</keyword>
<comment type="function">
    <text evidence="1">Non-catalytic component of the exosome, which is a complex involved in RNA degradation. Contributes to the structuring of the Rrp41 active site.</text>
</comment>
<comment type="subunit">
    <text evidence="1">Component of the archaeal exosome complex. Forms a hexameric ring-like arrangement composed of 3 Rrp41-Rrp42 heterodimers. The hexameric ring associates with a trimer of Rrp4 and/or Csl4 subunits.</text>
</comment>
<comment type="subcellular location">
    <subcellularLocation>
        <location evidence="1">Cytoplasm</location>
    </subcellularLocation>
</comment>
<comment type="similarity">
    <text evidence="1">Belongs to the RNase PH family. Rrp42 subfamily.</text>
</comment>
<reference key="1">
    <citation type="journal article" date="1999" name="Genetics">
        <title>Divergence of the hyperthermophilic archaea Pyrococcus furiosus and P. horikoshii inferred from complete genomic sequences.</title>
        <authorList>
            <person name="Maeder D.L."/>
            <person name="Weiss R.B."/>
            <person name="Dunn D.M."/>
            <person name="Cherry J.L."/>
            <person name="Gonzalez J.M."/>
            <person name="DiRuggiero J."/>
            <person name="Robb F.T."/>
        </authorList>
    </citation>
    <scope>NUCLEOTIDE SEQUENCE [LARGE SCALE GENOMIC DNA]</scope>
    <source>
        <strain>ATCC 43587 / DSM 3638 / JCM 8422 / Vc1</strain>
    </source>
</reference>
<evidence type="ECO:0000255" key="1">
    <source>
        <dbReference type="HAMAP-Rule" id="MF_00622"/>
    </source>
</evidence>